<proteinExistence type="inferred from homology"/>
<evidence type="ECO:0000255" key="1">
    <source>
        <dbReference type="HAMAP-Rule" id="MF_00377"/>
    </source>
</evidence>
<organism>
    <name type="scientific">Salmonella dublin (strain CT_02021853)</name>
    <dbReference type="NCBI Taxonomy" id="439851"/>
    <lineage>
        <taxon>Bacteria</taxon>
        <taxon>Pseudomonadati</taxon>
        <taxon>Pseudomonadota</taxon>
        <taxon>Gammaproteobacteria</taxon>
        <taxon>Enterobacterales</taxon>
        <taxon>Enterobacteriaceae</taxon>
        <taxon>Salmonella</taxon>
    </lineage>
</organism>
<protein>
    <recommendedName>
        <fullName evidence="1">Chromosomal replication initiator protein DnaA</fullName>
    </recommendedName>
</protein>
<name>DNAA_SALDC</name>
<reference key="1">
    <citation type="journal article" date="2011" name="J. Bacteriol.">
        <title>Comparative genomics of 28 Salmonella enterica isolates: evidence for CRISPR-mediated adaptive sublineage evolution.</title>
        <authorList>
            <person name="Fricke W.F."/>
            <person name="Mammel M.K."/>
            <person name="McDermott P.F."/>
            <person name="Tartera C."/>
            <person name="White D.G."/>
            <person name="Leclerc J.E."/>
            <person name="Ravel J."/>
            <person name="Cebula T.A."/>
        </authorList>
    </citation>
    <scope>NUCLEOTIDE SEQUENCE [LARGE SCALE GENOMIC DNA]</scope>
    <source>
        <strain>CT_02021853</strain>
    </source>
</reference>
<sequence length="466" mass="52598">MSLSLWQQCLARLQDELPATEFSMWIRPLQAELSDNTLALYAPNRFVLDWVRDKYLNNINGLLNAFCGADAPQLRFEVGTKPVTQTLKTPVHNVVAPTQTTTAQPQRVAPAARSGWDNVPAPAEPTYRSNVNVKHTFDNFVEGKSNQLARAAARQVADNPGGAYNPLFLYGGTGLGKTHLLHAVGNGIMARKPNAKVVYMHSERFVQDMVKALQNNAIEEFKRYYRSVDALLIDDIQFFANKERSQEEFFHTFNALLEGNQQIILTSDRYPKEINGVEDRLKSRFGWGLTVAIEPPELETRVAILMKKADENDIRLPGEVAFFIAKRLRSNVRELEGALNRVIANANFTGRAITIDFVREALRDLLALQEKLVTIDNIQKTVAEYYKIKIADLLSKRRSRSVARPRQMAMALAKELTNHSLPEIGDAFGGRDHTTVLHACRKIEQLREESHDIKEDFSNLIRTLSS</sequence>
<gene>
    <name evidence="1" type="primary">dnaA</name>
    <name type="ordered locus">SeD_A4230</name>
</gene>
<dbReference type="EMBL" id="CP001144">
    <property type="protein sequence ID" value="ACH77803.1"/>
    <property type="molecule type" value="Genomic_DNA"/>
</dbReference>
<dbReference type="RefSeq" id="WP_000059090.1">
    <property type="nucleotide sequence ID" value="NC_011205.1"/>
</dbReference>
<dbReference type="SMR" id="B5FN10"/>
<dbReference type="KEGG" id="sed:SeD_A4230"/>
<dbReference type="HOGENOM" id="CLU_026910_0_1_6"/>
<dbReference type="Proteomes" id="UP000008322">
    <property type="component" value="Chromosome"/>
</dbReference>
<dbReference type="GO" id="GO:0005737">
    <property type="term" value="C:cytoplasm"/>
    <property type="evidence" value="ECO:0007669"/>
    <property type="project" value="UniProtKB-SubCell"/>
</dbReference>
<dbReference type="GO" id="GO:0005886">
    <property type="term" value="C:plasma membrane"/>
    <property type="evidence" value="ECO:0007669"/>
    <property type="project" value="TreeGrafter"/>
</dbReference>
<dbReference type="GO" id="GO:0005524">
    <property type="term" value="F:ATP binding"/>
    <property type="evidence" value="ECO:0007669"/>
    <property type="project" value="UniProtKB-UniRule"/>
</dbReference>
<dbReference type="GO" id="GO:0016887">
    <property type="term" value="F:ATP hydrolysis activity"/>
    <property type="evidence" value="ECO:0007669"/>
    <property type="project" value="InterPro"/>
</dbReference>
<dbReference type="GO" id="GO:0003688">
    <property type="term" value="F:DNA replication origin binding"/>
    <property type="evidence" value="ECO:0007669"/>
    <property type="project" value="UniProtKB-UniRule"/>
</dbReference>
<dbReference type="GO" id="GO:0008289">
    <property type="term" value="F:lipid binding"/>
    <property type="evidence" value="ECO:0007669"/>
    <property type="project" value="UniProtKB-KW"/>
</dbReference>
<dbReference type="GO" id="GO:0006270">
    <property type="term" value="P:DNA replication initiation"/>
    <property type="evidence" value="ECO:0007669"/>
    <property type="project" value="UniProtKB-UniRule"/>
</dbReference>
<dbReference type="GO" id="GO:0006275">
    <property type="term" value="P:regulation of DNA replication"/>
    <property type="evidence" value="ECO:0007669"/>
    <property type="project" value="UniProtKB-UniRule"/>
</dbReference>
<dbReference type="CDD" id="cd00009">
    <property type="entry name" value="AAA"/>
    <property type="match status" value="1"/>
</dbReference>
<dbReference type="CDD" id="cd06571">
    <property type="entry name" value="Bac_DnaA_C"/>
    <property type="match status" value="1"/>
</dbReference>
<dbReference type="FunFam" id="1.10.1750.10:FF:000001">
    <property type="entry name" value="Chromosomal replication initiator protein DnaA"/>
    <property type="match status" value="1"/>
</dbReference>
<dbReference type="FunFam" id="1.10.8.60:FF:000003">
    <property type="entry name" value="Chromosomal replication initiator protein DnaA"/>
    <property type="match status" value="1"/>
</dbReference>
<dbReference type="FunFam" id="3.30.300.180:FF:000001">
    <property type="entry name" value="Chromosomal replication initiator protein DnaA"/>
    <property type="match status" value="1"/>
</dbReference>
<dbReference type="FunFam" id="3.40.50.300:FF:000103">
    <property type="entry name" value="Chromosomal replication initiator protein DnaA"/>
    <property type="match status" value="1"/>
</dbReference>
<dbReference type="Gene3D" id="1.10.1750.10">
    <property type="match status" value="1"/>
</dbReference>
<dbReference type="Gene3D" id="1.10.8.60">
    <property type="match status" value="1"/>
</dbReference>
<dbReference type="Gene3D" id="3.30.300.180">
    <property type="match status" value="1"/>
</dbReference>
<dbReference type="Gene3D" id="3.40.50.300">
    <property type="entry name" value="P-loop containing nucleotide triphosphate hydrolases"/>
    <property type="match status" value="1"/>
</dbReference>
<dbReference type="HAMAP" id="MF_00377">
    <property type="entry name" value="DnaA_bact"/>
    <property type="match status" value="1"/>
</dbReference>
<dbReference type="InterPro" id="IPR003593">
    <property type="entry name" value="AAA+_ATPase"/>
</dbReference>
<dbReference type="InterPro" id="IPR001957">
    <property type="entry name" value="Chromosome_initiator_DnaA"/>
</dbReference>
<dbReference type="InterPro" id="IPR020591">
    <property type="entry name" value="Chromosome_initiator_DnaA-like"/>
</dbReference>
<dbReference type="InterPro" id="IPR018312">
    <property type="entry name" value="Chromosome_initiator_DnaA_CS"/>
</dbReference>
<dbReference type="InterPro" id="IPR013159">
    <property type="entry name" value="DnaA_C"/>
</dbReference>
<dbReference type="InterPro" id="IPR013317">
    <property type="entry name" value="DnaA_dom"/>
</dbReference>
<dbReference type="InterPro" id="IPR024633">
    <property type="entry name" value="DnaA_N_dom"/>
</dbReference>
<dbReference type="InterPro" id="IPR038454">
    <property type="entry name" value="DnaA_N_sf"/>
</dbReference>
<dbReference type="InterPro" id="IPR027417">
    <property type="entry name" value="P-loop_NTPase"/>
</dbReference>
<dbReference type="InterPro" id="IPR010921">
    <property type="entry name" value="Trp_repressor/repl_initiator"/>
</dbReference>
<dbReference type="NCBIfam" id="TIGR00362">
    <property type="entry name" value="DnaA"/>
    <property type="match status" value="1"/>
</dbReference>
<dbReference type="PANTHER" id="PTHR30050">
    <property type="entry name" value="CHROMOSOMAL REPLICATION INITIATOR PROTEIN DNAA"/>
    <property type="match status" value="1"/>
</dbReference>
<dbReference type="PANTHER" id="PTHR30050:SF2">
    <property type="entry name" value="CHROMOSOMAL REPLICATION INITIATOR PROTEIN DNAA"/>
    <property type="match status" value="1"/>
</dbReference>
<dbReference type="Pfam" id="PF00308">
    <property type="entry name" value="Bac_DnaA"/>
    <property type="match status" value="1"/>
</dbReference>
<dbReference type="Pfam" id="PF08299">
    <property type="entry name" value="Bac_DnaA_C"/>
    <property type="match status" value="1"/>
</dbReference>
<dbReference type="Pfam" id="PF11638">
    <property type="entry name" value="DnaA_N"/>
    <property type="match status" value="1"/>
</dbReference>
<dbReference type="PRINTS" id="PR00051">
    <property type="entry name" value="DNAA"/>
</dbReference>
<dbReference type="SMART" id="SM00382">
    <property type="entry name" value="AAA"/>
    <property type="match status" value="1"/>
</dbReference>
<dbReference type="SMART" id="SM00760">
    <property type="entry name" value="Bac_DnaA_C"/>
    <property type="match status" value="1"/>
</dbReference>
<dbReference type="SUPFAM" id="SSF52540">
    <property type="entry name" value="P-loop containing nucleoside triphosphate hydrolases"/>
    <property type="match status" value="1"/>
</dbReference>
<dbReference type="SUPFAM" id="SSF48295">
    <property type="entry name" value="TrpR-like"/>
    <property type="match status" value="1"/>
</dbReference>
<dbReference type="PROSITE" id="PS01008">
    <property type="entry name" value="DNAA"/>
    <property type="match status" value="1"/>
</dbReference>
<keyword id="KW-0067">ATP-binding</keyword>
<keyword id="KW-0963">Cytoplasm</keyword>
<keyword id="KW-0235">DNA replication</keyword>
<keyword id="KW-0238">DNA-binding</keyword>
<keyword id="KW-0446">Lipid-binding</keyword>
<keyword id="KW-0547">Nucleotide-binding</keyword>
<feature type="chain" id="PRO_1000122009" description="Chromosomal replication initiator protein DnaA">
    <location>
        <begin position="1"/>
        <end position="466"/>
    </location>
</feature>
<feature type="region of interest" description="Domain I, interacts with DnaA modulators" evidence="1">
    <location>
        <begin position="1"/>
        <end position="86"/>
    </location>
</feature>
<feature type="region of interest" description="Domain II" evidence="1">
    <location>
        <begin position="86"/>
        <end position="129"/>
    </location>
</feature>
<feature type="region of interest" description="Domain III, AAA+ region" evidence="1">
    <location>
        <begin position="130"/>
        <end position="346"/>
    </location>
</feature>
<feature type="region of interest" description="Domain IV, binds dsDNA" evidence="1">
    <location>
        <begin position="347"/>
        <end position="466"/>
    </location>
</feature>
<feature type="binding site" evidence="1">
    <location>
        <position position="174"/>
    </location>
    <ligand>
        <name>ATP</name>
        <dbReference type="ChEBI" id="CHEBI:30616"/>
    </ligand>
</feature>
<feature type="binding site" evidence="1">
    <location>
        <position position="176"/>
    </location>
    <ligand>
        <name>ATP</name>
        <dbReference type="ChEBI" id="CHEBI:30616"/>
    </ligand>
</feature>
<feature type="binding site" evidence="1">
    <location>
        <position position="177"/>
    </location>
    <ligand>
        <name>ATP</name>
        <dbReference type="ChEBI" id="CHEBI:30616"/>
    </ligand>
</feature>
<feature type="binding site" evidence="1">
    <location>
        <position position="178"/>
    </location>
    <ligand>
        <name>ATP</name>
        <dbReference type="ChEBI" id="CHEBI:30616"/>
    </ligand>
</feature>
<accession>B5FN10</accession>
<comment type="function">
    <text evidence="1">Plays an essential role in the initiation and regulation of chromosomal replication. ATP-DnaA binds to the origin of replication (oriC) to initiate formation of the DNA replication initiation complex once per cell cycle. Binds the DnaA box (a 9 base pair repeat at the origin) and separates the double-stranded (ds)DNA. Forms a right-handed helical filament on oriC DNA; dsDNA binds to the exterior of the filament while single-stranded (ss)DNA is stabiized in the filament's interior. The ATP-DnaA-oriC complex binds and stabilizes one strand of the AT-rich DNA unwinding element (DUE), permitting loading of DNA polymerase. After initiation quickly degrades to an ADP-DnaA complex that is not apt for DNA replication. Binds acidic phospholipids.</text>
</comment>
<comment type="subunit">
    <text evidence="1">Oligomerizes as a right-handed, spiral filament on DNA at oriC.</text>
</comment>
<comment type="subcellular location">
    <subcellularLocation>
        <location evidence="1">Cytoplasm</location>
    </subcellularLocation>
</comment>
<comment type="domain">
    <text evidence="1">Domain I is involved in oligomerization and binding regulators, domain II is flexibile and of varying length in different bacteria, domain III forms the AAA+ region, while domain IV binds dsDNA.</text>
</comment>
<comment type="similarity">
    <text evidence="1">Belongs to the DnaA family.</text>
</comment>